<name>RL10_COREF</name>
<gene>
    <name evidence="1" type="primary">rplJ</name>
    <name type="ordered locus">CE0493</name>
</gene>
<accession>Q8FSA1</accession>
<organism>
    <name type="scientific">Corynebacterium efficiens (strain DSM 44549 / YS-314 / AJ 12310 / JCM 11189 / NBRC 100395)</name>
    <dbReference type="NCBI Taxonomy" id="196164"/>
    <lineage>
        <taxon>Bacteria</taxon>
        <taxon>Bacillati</taxon>
        <taxon>Actinomycetota</taxon>
        <taxon>Actinomycetes</taxon>
        <taxon>Mycobacteriales</taxon>
        <taxon>Corynebacteriaceae</taxon>
        <taxon>Corynebacterium</taxon>
    </lineage>
</organism>
<dbReference type="EMBL" id="BA000035">
    <property type="protein sequence ID" value="BAC17303.1"/>
    <property type="molecule type" value="Genomic_DNA"/>
</dbReference>
<dbReference type="RefSeq" id="WP_006770270.1">
    <property type="nucleotide sequence ID" value="NC_004369.1"/>
</dbReference>
<dbReference type="SMR" id="Q8FSA1"/>
<dbReference type="STRING" id="196164.gene:10740895"/>
<dbReference type="KEGG" id="cef:CE0493"/>
<dbReference type="eggNOG" id="COG0244">
    <property type="taxonomic scope" value="Bacteria"/>
</dbReference>
<dbReference type="HOGENOM" id="CLU_092227_1_0_11"/>
<dbReference type="OrthoDB" id="3186107at2"/>
<dbReference type="Proteomes" id="UP000001409">
    <property type="component" value="Chromosome"/>
</dbReference>
<dbReference type="GO" id="GO:1990904">
    <property type="term" value="C:ribonucleoprotein complex"/>
    <property type="evidence" value="ECO:0007669"/>
    <property type="project" value="UniProtKB-KW"/>
</dbReference>
<dbReference type="GO" id="GO:0005840">
    <property type="term" value="C:ribosome"/>
    <property type="evidence" value="ECO:0007669"/>
    <property type="project" value="UniProtKB-KW"/>
</dbReference>
<dbReference type="GO" id="GO:0070180">
    <property type="term" value="F:large ribosomal subunit rRNA binding"/>
    <property type="evidence" value="ECO:0007669"/>
    <property type="project" value="UniProtKB-UniRule"/>
</dbReference>
<dbReference type="GO" id="GO:0006412">
    <property type="term" value="P:translation"/>
    <property type="evidence" value="ECO:0007669"/>
    <property type="project" value="UniProtKB-UniRule"/>
</dbReference>
<dbReference type="CDD" id="cd05797">
    <property type="entry name" value="Ribosomal_L10"/>
    <property type="match status" value="1"/>
</dbReference>
<dbReference type="Gene3D" id="3.30.70.1730">
    <property type="match status" value="1"/>
</dbReference>
<dbReference type="HAMAP" id="MF_00362">
    <property type="entry name" value="Ribosomal_uL10"/>
    <property type="match status" value="1"/>
</dbReference>
<dbReference type="InterPro" id="IPR001790">
    <property type="entry name" value="Ribosomal_uL10"/>
</dbReference>
<dbReference type="InterPro" id="IPR043141">
    <property type="entry name" value="Ribosomal_uL10-like_sf"/>
</dbReference>
<dbReference type="InterPro" id="IPR022973">
    <property type="entry name" value="Ribosomal_uL10_bac"/>
</dbReference>
<dbReference type="InterPro" id="IPR047865">
    <property type="entry name" value="Ribosomal_uL10_bac_type"/>
</dbReference>
<dbReference type="NCBIfam" id="NF000955">
    <property type="entry name" value="PRK00099.1-1"/>
    <property type="match status" value="1"/>
</dbReference>
<dbReference type="PANTHER" id="PTHR11560">
    <property type="entry name" value="39S RIBOSOMAL PROTEIN L10, MITOCHONDRIAL"/>
    <property type="match status" value="1"/>
</dbReference>
<dbReference type="Pfam" id="PF00466">
    <property type="entry name" value="Ribosomal_L10"/>
    <property type="match status" value="1"/>
</dbReference>
<dbReference type="SUPFAM" id="SSF160369">
    <property type="entry name" value="Ribosomal protein L10-like"/>
    <property type="match status" value="1"/>
</dbReference>
<reference key="1">
    <citation type="journal article" date="2003" name="Genome Res.">
        <title>Comparative complete genome sequence analysis of the amino acid replacements responsible for the thermostability of Corynebacterium efficiens.</title>
        <authorList>
            <person name="Nishio Y."/>
            <person name="Nakamura Y."/>
            <person name="Kawarabayasi Y."/>
            <person name="Usuda Y."/>
            <person name="Kimura E."/>
            <person name="Sugimoto S."/>
            <person name="Matsui K."/>
            <person name="Yamagishi A."/>
            <person name="Kikuchi H."/>
            <person name="Ikeo K."/>
            <person name="Gojobori T."/>
        </authorList>
    </citation>
    <scope>NUCLEOTIDE SEQUENCE [LARGE SCALE GENOMIC DNA]</scope>
    <source>
        <strain>DSM 44549 / YS-314 / AJ 12310 / JCM 11189 / NBRC 100395</strain>
    </source>
</reference>
<sequence length="171" mass="17895">MANPKNEAALAELKAQFAETDSIVLTEYRGLTVAQTTELRRALGDDVQYSVAKNTLVKIAAQEAGVEGLDDLLTGPTAVAFIKGEAVDTAKVLKKFGDDNKAFVVKGGYMDGNALTADQVKAIAELDNRETTLAKLAGAMKGNLAKAAGLFNAPASQVARLAAALQEKKDA</sequence>
<comment type="function">
    <text evidence="1">Forms part of the ribosomal stalk, playing a central role in the interaction of the ribosome with GTP-bound translation factors.</text>
</comment>
<comment type="subunit">
    <text evidence="1">Part of the ribosomal stalk of the 50S ribosomal subunit. The N-terminus interacts with L11 and the large rRNA to form the base of the stalk. The C-terminus forms an elongated spine to which L12 dimers bind in a sequential fashion forming a multimeric L10(L12)X complex.</text>
</comment>
<comment type="similarity">
    <text evidence="1">Belongs to the universal ribosomal protein uL10 family.</text>
</comment>
<feature type="chain" id="PRO_0000154621" description="Large ribosomal subunit protein uL10">
    <location>
        <begin position="1"/>
        <end position="171"/>
    </location>
</feature>
<keyword id="KW-1185">Reference proteome</keyword>
<keyword id="KW-0687">Ribonucleoprotein</keyword>
<keyword id="KW-0689">Ribosomal protein</keyword>
<keyword id="KW-0694">RNA-binding</keyword>
<keyword id="KW-0699">rRNA-binding</keyword>
<proteinExistence type="inferred from homology"/>
<protein>
    <recommendedName>
        <fullName evidence="1">Large ribosomal subunit protein uL10</fullName>
    </recommendedName>
    <alternativeName>
        <fullName evidence="2">50S ribosomal protein L10</fullName>
    </alternativeName>
</protein>
<evidence type="ECO:0000255" key="1">
    <source>
        <dbReference type="HAMAP-Rule" id="MF_00362"/>
    </source>
</evidence>
<evidence type="ECO:0000305" key="2"/>